<gene>
    <name evidence="1" type="primary">groEL2</name>
    <name evidence="1" type="synonym">groL2</name>
    <name type="ordered locus">glr2897</name>
</gene>
<sequence>MAKMIVFDETARRALERGVNALADAVRVTLGPKGRNVVLEKKFGAPQIVNDGVTIAKEIELEDPLENTGAQLIREVASKTNDVAGDGTTTATVLAQALIREGLRNVAAGANPMSLKRGMEKTVAKLVQEIAAMAKPVEDNKTIAEVATISSGNDEEIGQMIAEAMDKVGKEGVITVEESKSLVTELDVVEGMQFDKGYVSPYFVTDTERMITDLDEPFILLTDKKISIIQDLIPVLEKVARAGRPLLIISEDLEGEALATLVVNKLRGVLNCVAVKAPGFGDRRKAMLQDIAVLTGGDVISEDIGLKLENVTIDMLGKARKVTITKDKTTIVAGTDNKAAVEKRIAQIHKQMEDTDSDFDREKLQERLAKLAGGVAVIKVGAATETELKDRKLRIEDALNATKAAVEEGIVPGGGTTLLHLTKKIDAIKAGLADDEKTGADLIARALEAPLRQIADNAGVEGSVIAQKVRELDFNIGYDAMKGEFVDMLAAGVADPAKVVRSALQNAASIAAMVLTTEVLIVDKPEKKKAGAGAPDMGGMGGMGGMGGMGGMM</sequence>
<proteinExistence type="inferred from homology"/>
<accession>Q7MBB4</accession>
<comment type="function">
    <text evidence="1">Together with its co-chaperonin GroES, plays an essential role in assisting protein folding. The GroEL-GroES system forms a nano-cage that allows encapsulation of the non-native substrate proteins and provides a physical environment optimized to promote and accelerate protein folding.</text>
</comment>
<comment type="catalytic activity">
    <reaction evidence="1">
        <text>ATP + H2O + a folded polypeptide = ADP + phosphate + an unfolded polypeptide.</text>
        <dbReference type="EC" id="5.6.1.7"/>
    </reaction>
</comment>
<comment type="subunit">
    <text evidence="1">Forms a cylinder of 14 subunits composed of two heptameric rings stacked back-to-back. Interacts with the co-chaperonin GroES.</text>
</comment>
<comment type="subcellular location">
    <subcellularLocation>
        <location evidence="1">Cytoplasm</location>
    </subcellularLocation>
</comment>
<comment type="similarity">
    <text evidence="1">Belongs to the chaperonin (HSP60) family.</text>
</comment>
<feature type="chain" id="PRO_0000063384" description="Chaperonin GroEL 2">
    <location>
        <begin position="1"/>
        <end position="553"/>
    </location>
</feature>
<feature type="binding site" evidence="1">
    <location>
        <begin position="29"/>
        <end position="32"/>
    </location>
    <ligand>
        <name>ATP</name>
        <dbReference type="ChEBI" id="CHEBI:30616"/>
    </ligand>
</feature>
<feature type="binding site" evidence="1">
    <location>
        <begin position="86"/>
        <end position="90"/>
    </location>
    <ligand>
        <name>ATP</name>
        <dbReference type="ChEBI" id="CHEBI:30616"/>
    </ligand>
</feature>
<feature type="binding site" evidence="1">
    <location>
        <position position="414"/>
    </location>
    <ligand>
        <name>ATP</name>
        <dbReference type="ChEBI" id="CHEBI:30616"/>
    </ligand>
</feature>
<feature type="binding site" evidence="1">
    <location>
        <position position="495"/>
    </location>
    <ligand>
        <name>ATP</name>
        <dbReference type="ChEBI" id="CHEBI:30616"/>
    </ligand>
</feature>
<protein>
    <recommendedName>
        <fullName evidence="1">Chaperonin GroEL 2</fullName>
        <ecNumber evidence="1">5.6.1.7</ecNumber>
    </recommendedName>
    <alternativeName>
        <fullName evidence="1">60 kDa chaperonin 2</fullName>
    </alternativeName>
    <alternativeName>
        <fullName evidence="1">Chaperonin-60 2</fullName>
        <shortName evidence="1">Cpn60 2</shortName>
    </alternativeName>
</protein>
<evidence type="ECO:0000255" key="1">
    <source>
        <dbReference type="HAMAP-Rule" id="MF_00600"/>
    </source>
</evidence>
<reference key="1">
    <citation type="journal article" date="2003" name="DNA Res.">
        <title>Complete genome structure of Gloeobacter violaceus PCC 7421, a cyanobacterium that lacks thylakoids.</title>
        <authorList>
            <person name="Nakamura Y."/>
            <person name="Kaneko T."/>
            <person name="Sato S."/>
            <person name="Mimuro M."/>
            <person name="Miyashita H."/>
            <person name="Tsuchiya T."/>
            <person name="Sasamoto S."/>
            <person name="Watanabe A."/>
            <person name="Kawashima K."/>
            <person name="Kishida Y."/>
            <person name="Kiyokawa C."/>
            <person name="Kohara M."/>
            <person name="Matsumoto M."/>
            <person name="Matsuno A."/>
            <person name="Nakazaki N."/>
            <person name="Shimpo S."/>
            <person name="Takeuchi C."/>
            <person name="Yamada M."/>
            <person name="Tabata S."/>
        </authorList>
    </citation>
    <scope>NUCLEOTIDE SEQUENCE [LARGE SCALE GENOMIC DNA]</scope>
    <source>
        <strain>ATCC 29082 / PCC 7421</strain>
    </source>
</reference>
<name>CH602_GLOVI</name>
<organism>
    <name type="scientific">Gloeobacter violaceus (strain ATCC 29082 / PCC 7421)</name>
    <dbReference type="NCBI Taxonomy" id="251221"/>
    <lineage>
        <taxon>Bacteria</taxon>
        <taxon>Bacillati</taxon>
        <taxon>Cyanobacteriota</taxon>
        <taxon>Cyanophyceae</taxon>
        <taxon>Gloeobacterales</taxon>
        <taxon>Gloeobacteraceae</taxon>
        <taxon>Gloeobacter</taxon>
    </lineage>
</organism>
<dbReference type="EC" id="5.6.1.7" evidence="1"/>
<dbReference type="EMBL" id="BA000045">
    <property type="protein sequence ID" value="BAC90838.1"/>
    <property type="molecule type" value="Genomic_DNA"/>
</dbReference>
<dbReference type="RefSeq" id="NP_925843.1">
    <property type="nucleotide sequence ID" value="NC_005125.1"/>
</dbReference>
<dbReference type="RefSeq" id="WP_011142891.1">
    <property type="nucleotide sequence ID" value="NC_005125.1"/>
</dbReference>
<dbReference type="SMR" id="Q7MBB4"/>
<dbReference type="FunCoup" id="Q7MBB4">
    <property type="interactions" value="322"/>
</dbReference>
<dbReference type="STRING" id="251221.gene:10760401"/>
<dbReference type="EnsemblBacteria" id="BAC90838">
    <property type="protein sequence ID" value="BAC90838"/>
    <property type="gene ID" value="BAC90838"/>
</dbReference>
<dbReference type="KEGG" id="gvi:glr2897"/>
<dbReference type="PATRIC" id="fig|251221.4.peg.2927"/>
<dbReference type="eggNOG" id="COG0459">
    <property type="taxonomic scope" value="Bacteria"/>
</dbReference>
<dbReference type="HOGENOM" id="CLU_016503_3_0_3"/>
<dbReference type="InParanoid" id="Q7MBB4"/>
<dbReference type="OrthoDB" id="9766614at2"/>
<dbReference type="PhylomeDB" id="Q7MBB4"/>
<dbReference type="Proteomes" id="UP000000557">
    <property type="component" value="Chromosome"/>
</dbReference>
<dbReference type="GO" id="GO:1990220">
    <property type="term" value="C:GroEL-GroES complex"/>
    <property type="evidence" value="ECO:0000318"/>
    <property type="project" value="GO_Central"/>
</dbReference>
<dbReference type="GO" id="GO:0005524">
    <property type="term" value="F:ATP binding"/>
    <property type="evidence" value="ECO:0000318"/>
    <property type="project" value="GO_Central"/>
</dbReference>
<dbReference type="GO" id="GO:0140662">
    <property type="term" value="F:ATP-dependent protein folding chaperone"/>
    <property type="evidence" value="ECO:0007669"/>
    <property type="project" value="InterPro"/>
</dbReference>
<dbReference type="GO" id="GO:0016853">
    <property type="term" value="F:isomerase activity"/>
    <property type="evidence" value="ECO:0007669"/>
    <property type="project" value="UniProtKB-KW"/>
</dbReference>
<dbReference type="GO" id="GO:0051082">
    <property type="term" value="F:unfolded protein binding"/>
    <property type="evidence" value="ECO:0000318"/>
    <property type="project" value="GO_Central"/>
</dbReference>
<dbReference type="GO" id="GO:0051085">
    <property type="term" value="P:chaperone cofactor-dependent protein refolding"/>
    <property type="evidence" value="ECO:0000318"/>
    <property type="project" value="GO_Central"/>
</dbReference>
<dbReference type="GO" id="GO:0042026">
    <property type="term" value="P:protein refolding"/>
    <property type="evidence" value="ECO:0007669"/>
    <property type="project" value="UniProtKB-UniRule"/>
</dbReference>
<dbReference type="GO" id="GO:0009408">
    <property type="term" value="P:response to heat"/>
    <property type="evidence" value="ECO:0000318"/>
    <property type="project" value="GO_Central"/>
</dbReference>
<dbReference type="CDD" id="cd03344">
    <property type="entry name" value="GroEL"/>
    <property type="match status" value="1"/>
</dbReference>
<dbReference type="FunFam" id="3.50.7.10:FF:000001">
    <property type="entry name" value="60 kDa chaperonin"/>
    <property type="match status" value="1"/>
</dbReference>
<dbReference type="Gene3D" id="3.50.7.10">
    <property type="entry name" value="GroEL"/>
    <property type="match status" value="1"/>
</dbReference>
<dbReference type="Gene3D" id="1.10.560.10">
    <property type="entry name" value="GroEL-like equatorial domain"/>
    <property type="match status" value="1"/>
</dbReference>
<dbReference type="Gene3D" id="3.30.260.10">
    <property type="entry name" value="TCP-1-like chaperonin intermediate domain"/>
    <property type="match status" value="1"/>
</dbReference>
<dbReference type="HAMAP" id="MF_00600">
    <property type="entry name" value="CH60"/>
    <property type="match status" value="1"/>
</dbReference>
<dbReference type="InterPro" id="IPR018370">
    <property type="entry name" value="Chaperonin_Cpn60_CS"/>
</dbReference>
<dbReference type="InterPro" id="IPR001844">
    <property type="entry name" value="Cpn60/GroEL"/>
</dbReference>
<dbReference type="InterPro" id="IPR002423">
    <property type="entry name" value="Cpn60/GroEL/TCP-1"/>
</dbReference>
<dbReference type="InterPro" id="IPR027409">
    <property type="entry name" value="GroEL-like_apical_dom_sf"/>
</dbReference>
<dbReference type="InterPro" id="IPR027413">
    <property type="entry name" value="GROEL-like_equatorial_sf"/>
</dbReference>
<dbReference type="InterPro" id="IPR027410">
    <property type="entry name" value="TCP-1-like_intermed_sf"/>
</dbReference>
<dbReference type="NCBIfam" id="TIGR02348">
    <property type="entry name" value="GroEL"/>
    <property type="match status" value="1"/>
</dbReference>
<dbReference type="NCBIfam" id="NF000592">
    <property type="entry name" value="PRK00013.1"/>
    <property type="match status" value="1"/>
</dbReference>
<dbReference type="NCBIfam" id="NF009487">
    <property type="entry name" value="PRK12849.1"/>
    <property type="match status" value="1"/>
</dbReference>
<dbReference type="NCBIfam" id="NF009488">
    <property type="entry name" value="PRK12850.1"/>
    <property type="match status" value="1"/>
</dbReference>
<dbReference type="NCBIfam" id="NF009489">
    <property type="entry name" value="PRK12851.1"/>
    <property type="match status" value="1"/>
</dbReference>
<dbReference type="PANTHER" id="PTHR45633">
    <property type="entry name" value="60 KDA HEAT SHOCK PROTEIN, MITOCHONDRIAL"/>
    <property type="match status" value="1"/>
</dbReference>
<dbReference type="Pfam" id="PF00118">
    <property type="entry name" value="Cpn60_TCP1"/>
    <property type="match status" value="1"/>
</dbReference>
<dbReference type="PRINTS" id="PR00298">
    <property type="entry name" value="CHAPERONIN60"/>
</dbReference>
<dbReference type="SUPFAM" id="SSF52029">
    <property type="entry name" value="GroEL apical domain-like"/>
    <property type="match status" value="1"/>
</dbReference>
<dbReference type="SUPFAM" id="SSF48592">
    <property type="entry name" value="GroEL equatorial domain-like"/>
    <property type="match status" value="2"/>
</dbReference>
<dbReference type="PROSITE" id="PS00296">
    <property type="entry name" value="CHAPERONINS_CPN60"/>
    <property type="match status" value="1"/>
</dbReference>
<keyword id="KW-0067">ATP-binding</keyword>
<keyword id="KW-0143">Chaperone</keyword>
<keyword id="KW-0963">Cytoplasm</keyword>
<keyword id="KW-0413">Isomerase</keyword>
<keyword id="KW-0547">Nucleotide-binding</keyword>
<keyword id="KW-1185">Reference proteome</keyword>